<accession>Q13TI1</accession>
<organism>
    <name type="scientific">Paraburkholderia xenovorans (strain LB400)</name>
    <dbReference type="NCBI Taxonomy" id="266265"/>
    <lineage>
        <taxon>Bacteria</taxon>
        <taxon>Pseudomonadati</taxon>
        <taxon>Pseudomonadota</taxon>
        <taxon>Betaproteobacteria</taxon>
        <taxon>Burkholderiales</taxon>
        <taxon>Burkholderiaceae</taxon>
        <taxon>Paraburkholderia</taxon>
    </lineage>
</organism>
<gene>
    <name evidence="1" type="primary">rplX</name>
    <name type="ordered locus">Bxeno_A4070</name>
    <name type="ORF">Bxe_A0325</name>
</gene>
<feature type="chain" id="PRO_1000052198" description="Large ribosomal subunit protein uL24">
    <location>
        <begin position="1"/>
        <end position="102"/>
    </location>
</feature>
<name>RL24_PARXL</name>
<keyword id="KW-1185">Reference proteome</keyword>
<keyword id="KW-0687">Ribonucleoprotein</keyword>
<keyword id="KW-0689">Ribosomal protein</keyword>
<keyword id="KW-0694">RNA-binding</keyword>
<keyword id="KW-0699">rRNA-binding</keyword>
<evidence type="ECO:0000255" key="1">
    <source>
        <dbReference type="HAMAP-Rule" id="MF_01326"/>
    </source>
</evidence>
<evidence type="ECO:0000305" key="2"/>
<sequence>MNKIRKGDEVIVITGKDKGKRGVVLSVGEGKVIVEGINLVKKHVKPNPMKGTTGGVEAKTMPLQISNVALVDANGKASRVGIKVEGDKKIRFLKTTGAELSA</sequence>
<dbReference type="EMBL" id="CP000270">
    <property type="protein sequence ID" value="ABE32608.1"/>
    <property type="molecule type" value="Genomic_DNA"/>
</dbReference>
<dbReference type="RefSeq" id="WP_011490052.1">
    <property type="nucleotide sequence ID" value="NC_007951.1"/>
</dbReference>
<dbReference type="SMR" id="Q13TI1"/>
<dbReference type="STRING" id="266265.Bxe_A0325"/>
<dbReference type="KEGG" id="bxb:DR64_2495"/>
<dbReference type="KEGG" id="bxe:Bxe_A0325"/>
<dbReference type="PATRIC" id="fig|266265.5.peg.4300"/>
<dbReference type="eggNOG" id="COG0198">
    <property type="taxonomic scope" value="Bacteria"/>
</dbReference>
<dbReference type="OrthoDB" id="9807419at2"/>
<dbReference type="Proteomes" id="UP000001817">
    <property type="component" value="Chromosome 1"/>
</dbReference>
<dbReference type="GO" id="GO:1990904">
    <property type="term" value="C:ribonucleoprotein complex"/>
    <property type="evidence" value="ECO:0007669"/>
    <property type="project" value="UniProtKB-KW"/>
</dbReference>
<dbReference type="GO" id="GO:0005840">
    <property type="term" value="C:ribosome"/>
    <property type="evidence" value="ECO:0007669"/>
    <property type="project" value="UniProtKB-KW"/>
</dbReference>
<dbReference type="GO" id="GO:0019843">
    <property type="term" value="F:rRNA binding"/>
    <property type="evidence" value="ECO:0007669"/>
    <property type="project" value="UniProtKB-UniRule"/>
</dbReference>
<dbReference type="GO" id="GO:0003735">
    <property type="term" value="F:structural constituent of ribosome"/>
    <property type="evidence" value="ECO:0007669"/>
    <property type="project" value="InterPro"/>
</dbReference>
<dbReference type="GO" id="GO:0006412">
    <property type="term" value="P:translation"/>
    <property type="evidence" value="ECO:0007669"/>
    <property type="project" value="UniProtKB-UniRule"/>
</dbReference>
<dbReference type="CDD" id="cd06089">
    <property type="entry name" value="KOW_RPL26"/>
    <property type="match status" value="1"/>
</dbReference>
<dbReference type="Gene3D" id="2.30.30.30">
    <property type="match status" value="1"/>
</dbReference>
<dbReference type="HAMAP" id="MF_01326_B">
    <property type="entry name" value="Ribosomal_uL24_B"/>
    <property type="match status" value="1"/>
</dbReference>
<dbReference type="InterPro" id="IPR005824">
    <property type="entry name" value="KOW"/>
</dbReference>
<dbReference type="InterPro" id="IPR014722">
    <property type="entry name" value="Rib_uL2_dom2"/>
</dbReference>
<dbReference type="InterPro" id="IPR003256">
    <property type="entry name" value="Ribosomal_uL24"/>
</dbReference>
<dbReference type="InterPro" id="IPR005825">
    <property type="entry name" value="Ribosomal_uL24_CS"/>
</dbReference>
<dbReference type="InterPro" id="IPR041988">
    <property type="entry name" value="Ribosomal_uL24_KOW"/>
</dbReference>
<dbReference type="InterPro" id="IPR008991">
    <property type="entry name" value="Translation_prot_SH3-like_sf"/>
</dbReference>
<dbReference type="NCBIfam" id="TIGR01079">
    <property type="entry name" value="rplX_bact"/>
    <property type="match status" value="1"/>
</dbReference>
<dbReference type="PANTHER" id="PTHR12903">
    <property type="entry name" value="MITOCHONDRIAL RIBOSOMAL PROTEIN L24"/>
    <property type="match status" value="1"/>
</dbReference>
<dbReference type="Pfam" id="PF00467">
    <property type="entry name" value="KOW"/>
    <property type="match status" value="1"/>
</dbReference>
<dbReference type="Pfam" id="PF17136">
    <property type="entry name" value="ribosomal_L24"/>
    <property type="match status" value="1"/>
</dbReference>
<dbReference type="SMART" id="SM00739">
    <property type="entry name" value="KOW"/>
    <property type="match status" value="1"/>
</dbReference>
<dbReference type="SUPFAM" id="SSF50104">
    <property type="entry name" value="Translation proteins SH3-like domain"/>
    <property type="match status" value="1"/>
</dbReference>
<dbReference type="PROSITE" id="PS01108">
    <property type="entry name" value="RIBOSOMAL_L24"/>
    <property type="match status" value="1"/>
</dbReference>
<reference key="1">
    <citation type="journal article" date="2006" name="Proc. Natl. Acad. Sci. U.S.A.">
        <title>Burkholderia xenovorans LB400 harbors a multi-replicon, 9.73-Mbp genome shaped for versatility.</title>
        <authorList>
            <person name="Chain P.S.G."/>
            <person name="Denef V.J."/>
            <person name="Konstantinidis K.T."/>
            <person name="Vergez L.M."/>
            <person name="Agullo L."/>
            <person name="Reyes V.L."/>
            <person name="Hauser L."/>
            <person name="Cordova M."/>
            <person name="Gomez L."/>
            <person name="Gonzalez M."/>
            <person name="Land M."/>
            <person name="Lao V."/>
            <person name="Larimer F."/>
            <person name="LiPuma J.J."/>
            <person name="Mahenthiralingam E."/>
            <person name="Malfatti S.A."/>
            <person name="Marx C.J."/>
            <person name="Parnell J.J."/>
            <person name="Ramette A."/>
            <person name="Richardson P."/>
            <person name="Seeger M."/>
            <person name="Smith D."/>
            <person name="Spilker T."/>
            <person name="Sul W.J."/>
            <person name="Tsoi T.V."/>
            <person name="Ulrich L.E."/>
            <person name="Zhulin I.B."/>
            <person name="Tiedje J.M."/>
        </authorList>
    </citation>
    <scope>NUCLEOTIDE SEQUENCE [LARGE SCALE GENOMIC DNA]</scope>
    <source>
        <strain>LB400</strain>
    </source>
</reference>
<protein>
    <recommendedName>
        <fullName evidence="1">Large ribosomal subunit protein uL24</fullName>
    </recommendedName>
    <alternativeName>
        <fullName evidence="2">50S ribosomal protein L24</fullName>
    </alternativeName>
</protein>
<comment type="function">
    <text evidence="1">One of two assembly initiator proteins, it binds directly to the 5'-end of the 23S rRNA, where it nucleates assembly of the 50S subunit.</text>
</comment>
<comment type="function">
    <text evidence="1">One of the proteins that surrounds the polypeptide exit tunnel on the outside of the subunit.</text>
</comment>
<comment type="subunit">
    <text evidence="1">Part of the 50S ribosomal subunit.</text>
</comment>
<comment type="similarity">
    <text evidence="1">Belongs to the universal ribosomal protein uL24 family.</text>
</comment>
<proteinExistence type="inferred from homology"/>